<dbReference type="EMBL" id="AE004091">
    <property type="protein sequence ID" value="AAG04054.1"/>
    <property type="molecule type" value="Genomic_DNA"/>
</dbReference>
<dbReference type="PIR" id="H83562">
    <property type="entry name" value="H83562"/>
</dbReference>
<dbReference type="RefSeq" id="NP_249356.1">
    <property type="nucleotide sequence ID" value="NC_002516.2"/>
</dbReference>
<dbReference type="RefSeq" id="WP_003085254.1">
    <property type="nucleotide sequence ID" value="NZ_QZGE01000010.1"/>
</dbReference>
<dbReference type="SMR" id="Q9I5Q6"/>
<dbReference type="FunCoup" id="Q9I5Q6">
    <property type="interactions" value="555"/>
</dbReference>
<dbReference type="STRING" id="208964.PA0665"/>
<dbReference type="PaxDb" id="208964-PA0665"/>
<dbReference type="DNASU" id="879482"/>
<dbReference type="GeneID" id="77219168"/>
<dbReference type="GeneID" id="879482"/>
<dbReference type="KEGG" id="pae:PA0665"/>
<dbReference type="PATRIC" id="fig|208964.12.peg.696"/>
<dbReference type="PseudoCAP" id="PA0665"/>
<dbReference type="HOGENOM" id="CLU_069054_5_3_6"/>
<dbReference type="InParanoid" id="Q9I5Q6"/>
<dbReference type="OrthoDB" id="9801228at2"/>
<dbReference type="PhylomeDB" id="Q9I5Q6"/>
<dbReference type="BioCyc" id="PAER208964:G1FZ6-670-MONOMER"/>
<dbReference type="Proteomes" id="UP000002438">
    <property type="component" value="Chromosome"/>
</dbReference>
<dbReference type="GO" id="GO:0005829">
    <property type="term" value="C:cytosol"/>
    <property type="evidence" value="ECO:0000318"/>
    <property type="project" value="GO_Central"/>
</dbReference>
<dbReference type="GO" id="GO:0051537">
    <property type="term" value="F:2 iron, 2 sulfur cluster binding"/>
    <property type="evidence" value="ECO:0000318"/>
    <property type="project" value="GO_Central"/>
</dbReference>
<dbReference type="GO" id="GO:0051539">
    <property type="term" value="F:4 iron, 4 sulfur cluster binding"/>
    <property type="evidence" value="ECO:0000318"/>
    <property type="project" value="GO_Central"/>
</dbReference>
<dbReference type="GO" id="GO:0005506">
    <property type="term" value="F:iron ion binding"/>
    <property type="evidence" value="ECO:0000318"/>
    <property type="project" value="GO_Central"/>
</dbReference>
<dbReference type="GO" id="GO:0016226">
    <property type="term" value="P:iron-sulfur cluster assembly"/>
    <property type="evidence" value="ECO:0000318"/>
    <property type="project" value="GO_Central"/>
</dbReference>
<dbReference type="FunFam" id="2.60.300.12:FF:000002">
    <property type="entry name" value="Iron-sulfur cluster insertion protein ErpA"/>
    <property type="match status" value="1"/>
</dbReference>
<dbReference type="Gene3D" id="2.60.300.12">
    <property type="entry name" value="HesB-like domain"/>
    <property type="match status" value="1"/>
</dbReference>
<dbReference type="HAMAP" id="MF_01380">
    <property type="entry name" value="Fe_S_insert_ErpA"/>
    <property type="match status" value="1"/>
</dbReference>
<dbReference type="InterPro" id="IPR000361">
    <property type="entry name" value="FeS_biogenesis"/>
</dbReference>
<dbReference type="InterPro" id="IPR016092">
    <property type="entry name" value="FeS_cluster_insertion"/>
</dbReference>
<dbReference type="InterPro" id="IPR017870">
    <property type="entry name" value="FeS_cluster_insertion_CS"/>
</dbReference>
<dbReference type="InterPro" id="IPR023063">
    <property type="entry name" value="FeS_cluster_insertion_RrpA"/>
</dbReference>
<dbReference type="InterPro" id="IPR035903">
    <property type="entry name" value="HesB-like_dom_sf"/>
</dbReference>
<dbReference type="NCBIfam" id="TIGR00049">
    <property type="entry name" value="iron-sulfur cluster assembly accessory protein"/>
    <property type="match status" value="1"/>
</dbReference>
<dbReference type="NCBIfam" id="NF010147">
    <property type="entry name" value="PRK13623.1"/>
    <property type="match status" value="1"/>
</dbReference>
<dbReference type="PANTHER" id="PTHR43011">
    <property type="entry name" value="IRON-SULFUR CLUSTER ASSEMBLY 2 HOMOLOG, MITOCHONDRIAL"/>
    <property type="match status" value="1"/>
</dbReference>
<dbReference type="PANTHER" id="PTHR43011:SF1">
    <property type="entry name" value="IRON-SULFUR CLUSTER ASSEMBLY 2 HOMOLOG, MITOCHONDRIAL"/>
    <property type="match status" value="1"/>
</dbReference>
<dbReference type="Pfam" id="PF01521">
    <property type="entry name" value="Fe-S_biosyn"/>
    <property type="match status" value="1"/>
</dbReference>
<dbReference type="SUPFAM" id="SSF89360">
    <property type="entry name" value="HesB-like domain"/>
    <property type="match status" value="1"/>
</dbReference>
<dbReference type="PROSITE" id="PS01152">
    <property type="entry name" value="HESB"/>
    <property type="match status" value="1"/>
</dbReference>
<evidence type="ECO:0000255" key="1">
    <source>
        <dbReference type="HAMAP-Rule" id="MF_01380"/>
    </source>
</evidence>
<accession>Q9I5Q6</accession>
<comment type="function">
    <text evidence="1">Required for insertion of 4Fe-4S clusters for at least IspG.</text>
</comment>
<comment type="cofactor">
    <cofactor evidence="1">
        <name>iron-sulfur cluster</name>
        <dbReference type="ChEBI" id="CHEBI:30408"/>
    </cofactor>
    <text evidence="1">Binds 1 iron-sulfur cluster per subunit.</text>
</comment>
<comment type="subunit">
    <text evidence="1">Homodimer.</text>
</comment>
<comment type="similarity">
    <text evidence="1">Belongs to the HesB/IscA family.</text>
</comment>
<protein>
    <recommendedName>
        <fullName evidence="1">Iron-sulfur cluster insertion protein ErpA</fullName>
    </recommendedName>
</protein>
<reference key="1">
    <citation type="journal article" date="2000" name="Nature">
        <title>Complete genome sequence of Pseudomonas aeruginosa PAO1, an opportunistic pathogen.</title>
        <authorList>
            <person name="Stover C.K."/>
            <person name="Pham X.-Q.T."/>
            <person name="Erwin A.L."/>
            <person name="Mizoguchi S.D."/>
            <person name="Warrener P."/>
            <person name="Hickey M.J."/>
            <person name="Brinkman F.S.L."/>
            <person name="Hufnagle W.O."/>
            <person name="Kowalik D.J."/>
            <person name="Lagrou M."/>
            <person name="Garber R.L."/>
            <person name="Goltry L."/>
            <person name="Tolentino E."/>
            <person name="Westbrock-Wadman S."/>
            <person name="Yuan Y."/>
            <person name="Brody L.L."/>
            <person name="Coulter S.N."/>
            <person name="Folger K.R."/>
            <person name="Kas A."/>
            <person name="Larbig K."/>
            <person name="Lim R.M."/>
            <person name="Smith K.A."/>
            <person name="Spencer D.H."/>
            <person name="Wong G.K.-S."/>
            <person name="Wu Z."/>
            <person name="Paulsen I.T."/>
            <person name="Reizer J."/>
            <person name="Saier M.H. Jr."/>
            <person name="Hancock R.E.W."/>
            <person name="Lory S."/>
            <person name="Olson M.V."/>
        </authorList>
    </citation>
    <scope>NUCLEOTIDE SEQUENCE [LARGE SCALE GENOMIC DNA]</scope>
    <source>
        <strain>ATCC 15692 / DSM 22644 / CIP 104116 / JCM 14847 / LMG 12228 / 1C / PRS 101 / PAO1</strain>
    </source>
</reference>
<gene>
    <name evidence="1" type="primary">erpA</name>
    <name type="ordered locus">PA0665</name>
</gene>
<organism>
    <name type="scientific">Pseudomonas aeruginosa (strain ATCC 15692 / DSM 22644 / CIP 104116 / JCM 14847 / LMG 12228 / 1C / PRS 101 / PAO1)</name>
    <dbReference type="NCBI Taxonomy" id="208964"/>
    <lineage>
        <taxon>Bacteria</taxon>
        <taxon>Pseudomonadati</taxon>
        <taxon>Pseudomonadota</taxon>
        <taxon>Gammaproteobacteria</taxon>
        <taxon>Pseudomonadales</taxon>
        <taxon>Pseudomonadaceae</taxon>
        <taxon>Pseudomonas</taxon>
    </lineage>
</organism>
<sequence>MSIETFTPTPLLFTPGAANKVKTLIDEEGNPRLKLRVFVTGGGCSGFQYGFTFDEDIADDDTVIERDGVGLVVDPMSFQYLAGSEVDYQEGLEGSRFVIKNPNAATTCGCGQSFSI</sequence>
<feature type="chain" id="PRO_0000311523" description="Iron-sulfur cluster insertion protein ErpA">
    <location>
        <begin position="1"/>
        <end position="116"/>
    </location>
</feature>
<feature type="binding site" evidence="1">
    <location>
        <position position="44"/>
    </location>
    <ligand>
        <name>iron-sulfur cluster</name>
        <dbReference type="ChEBI" id="CHEBI:30408"/>
    </ligand>
</feature>
<feature type="binding site" evidence="1">
    <location>
        <position position="108"/>
    </location>
    <ligand>
        <name>iron-sulfur cluster</name>
        <dbReference type="ChEBI" id="CHEBI:30408"/>
    </ligand>
</feature>
<feature type="binding site" evidence="1">
    <location>
        <position position="110"/>
    </location>
    <ligand>
        <name>iron-sulfur cluster</name>
        <dbReference type="ChEBI" id="CHEBI:30408"/>
    </ligand>
</feature>
<keyword id="KW-0408">Iron</keyword>
<keyword id="KW-0411">Iron-sulfur</keyword>
<keyword id="KW-0479">Metal-binding</keyword>
<keyword id="KW-1185">Reference proteome</keyword>
<proteinExistence type="inferred from homology"/>
<name>ERPA_PSEAE</name>